<name>BQT3_SCHPO</name>
<sequence>MSGSKCCSSSNTIKVSIYLFLHTLTYGLLNYHLNPRLLASTGVVESDIPYWMSYLSIIMHVGQSLLLQKFNLGYGWLLLTKYPVYVLLSTYYLTPLSQIAWAFIIDAISLLVARCFSRANPIKCSNQVNTQYSVSFLFTIMASVLISVLNYISQKIFLNGLILGNSHNVVTSLVAPPLPLQYLAHVPIGYVIQRVVFSERPIPQSLFLMIFLTLWNCFIPYSILFSMNWSAMFQVVGAYLSQIWIITFICWALSL</sequence>
<evidence type="ECO:0000255" key="1"/>
<evidence type="ECO:0000269" key="2">
    <source>
    </source>
</evidence>
<evidence type="ECO:0000269" key="3">
    <source>
    </source>
</evidence>
<dbReference type="EMBL" id="CU329672">
    <property type="protein sequence ID" value="CAA20666.1"/>
    <property type="molecule type" value="Genomic_DNA"/>
</dbReference>
<dbReference type="PIR" id="T41451">
    <property type="entry name" value="T41451"/>
</dbReference>
<dbReference type="RefSeq" id="NP_587793.1">
    <property type="nucleotide sequence ID" value="NM_001022786.2"/>
</dbReference>
<dbReference type="BioGRID" id="276141">
    <property type="interactions" value="30"/>
</dbReference>
<dbReference type="STRING" id="284812.O74510"/>
<dbReference type="PaxDb" id="4896-SPCC594.07c.1"/>
<dbReference type="EnsemblFungi" id="SPCC594.07c.1">
    <property type="protein sequence ID" value="SPCC594.07c.1:pep"/>
    <property type="gene ID" value="SPCC594.07c"/>
</dbReference>
<dbReference type="GeneID" id="2539582"/>
<dbReference type="KEGG" id="spo:2539582"/>
<dbReference type="PomBase" id="SPCC594.07c">
    <property type="gene designation" value="bqt3"/>
</dbReference>
<dbReference type="VEuPathDB" id="FungiDB:SPCC594.07c"/>
<dbReference type="HOGENOM" id="CLU_1046471_0_0_1"/>
<dbReference type="InParanoid" id="O74510"/>
<dbReference type="OMA" id="FSIWNCA"/>
<dbReference type="PRO" id="PR:O74510"/>
<dbReference type="Proteomes" id="UP000002485">
    <property type="component" value="Chromosome III"/>
</dbReference>
<dbReference type="GO" id="GO:0005789">
    <property type="term" value="C:endoplasmic reticulum membrane"/>
    <property type="evidence" value="ECO:0007669"/>
    <property type="project" value="UniProtKB-SubCell"/>
</dbReference>
<dbReference type="GO" id="GO:0005637">
    <property type="term" value="C:nuclear inner membrane"/>
    <property type="evidence" value="ECO:0000314"/>
    <property type="project" value="PomBase"/>
</dbReference>
<dbReference type="GO" id="GO:1990862">
    <property type="term" value="C:nuclear membrane complex Bqt3-Bqt4"/>
    <property type="evidence" value="ECO:0000353"/>
    <property type="project" value="PomBase"/>
</dbReference>
<dbReference type="GO" id="GO:0140473">
    <property type="term" value="F:telomere-nuclear envelope anchor activity"/>
    <property type="evidence" value="ECO:0000353"/>
    <property type="project" value="PomBase"/>
</dbReference>
<dbReference type="GO" id="GO:0051301">
    <property type="term" value="P:cell division"/>
    <property type="evidence" value="ECO:0007669"/>
    <property type="project" value="UniProtKB-KW"/>
</dbReference>
<dbReference type="GO" id="GO:0045141">
    <property type="term" value="P:meiotic telomere clustering"/>
    <property type="evidence" value="ECO:0000315"/>
    <property type="project" value="PomBase"/>
</dbReference>
<feature type="chain" id="PRO_0000304117" description="Bouquet formation protein 3">
    <location>
        <begin position="1"/>
        <end position="255"/>
    </location>
</feature>
<feature type="transmembrane region" description="Helical" evidence="1">
    <location>
        <begin position="13"/>
        <end position="33"/>
    </location>
</feature>
<feature type="transmembrane region" description="Helical" evidence="1">
    <location>
        <begin position="48"/>
        <end position="68"/>
    </location>
</feature>
<feature type="transmembrane region" description="Helical" evidence="1">
    <location>
        <begin position="72"/>
        <end position="94"/>
    </location>
</feature>
<feature type="transmembrane region" description="Helical" evidence="1">
    <location>
        <begin position="99"/>
        <end position="116"/>
    </location>
</feature>
<feature type="transmembrane region" description="Helical" evidence="1">
    <location>
        <begin position="132"/>
        <end position="152"/>
    </location>
</feature>
<feature type="transmembrane region" description="Helical" evidence="1">
    <location>
        <begin position="172"/>
        <end position="192"/>
    </location>
</feature>
<feature type="transmembrane region" description="Helical" evidence="1">
    <location>
        <begin position="205"/>
        <end position="225"/>
    </location>
</feature>
<feature type="transmembrane region" description="Helical" evidence="1">
    <location>
        <begin position="235"/>
        <end position="255"/>
    </location>
</feature>
<gene>
    <name type="primary">bqt3</name>
    <name type="ORF">SPCC594.07c</name>
</gene>
<reference key="1">
    <citation type="journal article" date="2002" name="Nature">
        <title>The genome sequence of Schizosaccharomyces pombe.</title>
        <authorList>
            <person name="Wood V."/>
            <person name="Gwilliam R."/>
            <person name="Rajandream M.A."/>
            <person name="Lyne M.H."/>
            <person name="Lyne R."/>
            <person name="Stewart A."/>
            <person name="Sgouros J.G."/>
            <person name="Peat N."/>
            <person name="Hayles J."/>
            <person name="Baker S.G."/>
            <person name="Basham D."/>
            <person name="Bowman S."/>
            <person name="Brooks K."/>
            <person name="Brown D."/>
            <person name="Brown S."/>
            <person name="Chillingworth T."/>
            <person name="Churcher C.M."/>
            <person name="Collins M."/>
            <person name="Connor R."/>
            <person name="Cronin A."/>
            <person name="Davis P."/>
            <person name="Feltwell T."/>
            <person name="Fraser A."/>
            <person name="Gentles S."/>
            <person name="Goble A."/>
            <person name="Hamlin N."/>
            <person name="Harris D.E."/>
            <person name="Hidalgo J."/>
            <person name="Hodgson G."/>
            <person name="Holroyd S."/>
            <person name="Hornsby T."/>
            <person name="Howarth S."/>
            <person name="Huckle E.J."/>
            <person name="Hunt S."/>
            <person name="Jagels K."/>
            <person name="James K.D."/>
            <person name="Jones L."/>
            <person name="Jones M."/>
            <person name="Leather S."/>
            <person name="McDonald S."/>
            <person name="McLean J."/>
            <person name="Mooney P."/>
            <person name="Moule S."/>
            <person name="Mungall K.L."/>
            <person name="Murphy L.D."/>
            <person name="Niblett D."/>
            <person name="Odell C."/>
            <person name="Oliver K."/>
            <person name="O'Neil S."/>
            <person name="Pearson D."/>
            <person name="Quail M.A."/>
            <person name="Rabbinowitsch E."/>
            <person name="Rutherford K.M."/>
            <person name="Rutter S."/>
            <person name="Saunders D."/>
            <person name="Seeger K."/>
            <person name="Sharp S."/>
            <person name="Skelton J."/>
            <person name="Simmonds M.N."/>
            <person name="Squares R."/>
            <person name="Squares S."/>
            <person name="Stevens K."/>
            <person name="Taylor K."/>
            <person name="Taylor R.G."/>
            <person name="Tivey A."/>
            <person name="Walsh S.V."/>
            <person name="Warren T."/>
            <person name="Whitehead S."/>
            <person name="Woodward J.R."/>
            <person name="Volckaert G."/>
            <person name="Aert R."/>
            <person name="Robben J."/>
            <person name="Grymonprez B."/>
            <person name="Weltjens I."/>
            <person name="Vanstreels E."/>
            <person name="Rieger M."/>
            <person name="Schaefer M."/>
            <person name="Mueller-Auer S."/>
            <person name="Gabel C."/>
            <person name="Fuchs M."/>
            <person name="Duesterhoeft A."/>
            <person name="Fritzc C."/>
            <person name="Holzer E."/>
            <person name="Moestl D."/>
            <person name="Hilbert H."/>
            <person name="Borzym K."/>
            <person name="Langer I."/>
            <person name="Beck A."/>
            <person name="Lehrach H."/>
            <person name="Reinhardt R."/>
            <person name="Pohl T.M."/>
            <person name="Eger P."/>
            <person name="Zimmermann W."/>
            <person name="Wedler H."/>
            <person name="Wambutt R."/>
            <person name="Purnelle B."/>
            <person name="Goffeau A."/>
            <person name="Cadieu E."/>
            <person name="Dreano S."/>
            <person name="Gloux S."/>
            <person name="Lelaure V."/>
            <person name="Mottier S."/>
            <person name="Galibert F."/>
            <person name="Aves S.J."/>
            <person name="Xiang Z."/>
            <person name="Hunt C."/>
            <person name="Moore K."/>
            <person name="Hurst S.M."/>
            <person name="Lucas M."/>
            <person name="Rochet M."/>
            <person name="Gaillardin C."/>
            <person name="Tallada V.A."/>
            <person name="Garzon A."/>
            <person name="Thode G."/>
            <person name="Daga R.R."/>
            <person name="Cruzado L."/>
            <person name="Jimenez J."/>
            <person name="Sanchez M."/>
            <person name="del Rey F."/>
            <person name="Benito J."/>
            <person name="Dominguez A."/>
            <person name="Revuelta J.L."/>
            <person name="Moreno S."/>
            <person name="Armstrong J."/>
            <person name="Forsburg S.L."/>
            <person name="Cerutti L."/>
            <person name="Lowe T."/>
            <person name="McCombie W.R."/>
            <person name="Paulsen I."/>
            <person name="Potashkin J."/>
            <person name="Shpakovski G.V."/>
            <person name="Ussery D."/>
            <person name="Barrell B.G."/>
            <person name="Nurse P."/>
        </authorList>
    </citation>
    <scope>NUCLEOTIDE SEQUENCE [LARGE SCALE GENOMIC DNA]</scope>
    <source>
        <strain>972 / ATCC 24843</strain>
    </source>
</reference>
<reference key="2">
    <citation type="journal article" date="2006" name="Nat. Biotechnol.">
        <title>ORFeome cloning and global analysis of protein localization in the fission yeast Schizosaccharomyces pombe.</title>
        <authorList>
            <person name="Matsuyama A."/>
            <person name="Arai R."/>
            <person name="Yashiroda Y."/>
            <person name="Shirai A."/>
            <person name="Kamata A."/>
            <person name="Sekido S."/>
            <person name="Kobayashi Y."/>
            <person name="Hashimoto A."/>
            <person name="Hamamoto M."/>
            <person name="Hiraoka Y."/>
            <person name="Horinouchi S."/>
            <person name="Yoshida M."/>
        </authorList>
    </citation>
    <scope>SUBCELLULAR LOCATION [LARGE SCALE ANALYSIS]</scope>
</reference>
<reference key="3">
    <citation type="journal article" date="2009" name="J. Cell Biol.">
        <title>Membrane proteins Bqt3 and -4 anchor telomeres to the nuclear envelope to ensure chromosomal bouquet formation.</title>
        <authorList>
            <person name="Chikashige Y."/>
            <person name="Yamane M."/>
            <person name="Okamasa K."/>
            <person name="Tsutsumi C."/>
            <person name="Kojidani T."/>
            <person name="Sato M."/>
            <person name="Haraguchi T."/>
            <person name="Hiraoka Y."/>
        </authorList>
    </citation>
    <scope>SUBCELLULAR LOCATION</scope>
    <scope>FUNCTION</scope>
</reference>
<protein>
    <recommendedName>
        <fullName>Bouquet formation protein 3</fullName>
    </recommendedName>
</protein>
<comment type="function">
    <text evidence="3">Connects telomeres to the nuclear envelop (NE) during both vegetative growth and meiosis. This connection ensures clustering of telomeres to the spindle pole body (SPB) when cells enter meiotic prophase.</text>
</comment>
<comment type="subcellular location">
    <subcellularLocation>
        <location evidence="2 3">Endoplasmic reticulum membrane</location>
        <topology evidence="1">Multi-pass membrane protein</topology>
    </subcellularLocation>
    <subcellularLocation>
        <location evidence="3">Nucleus inner membrane</location>
        <topology evidence="1">Multi-pass membrane protein</topology>
    </subcellularLocation>
</comment>
<organism>
    <name type="scientific">Schizosaccharomyces pombe (strain 972 / ATCC 24843)</name>
    <name type="common">Fission yeast</name>
    <dbReference type="NCBI Taxonomy" id="284812"/>
    <lineage>
        <taxon>Eukaryota</taxon>
        <taxon>Fungi</taxon>
        <taxon>Dikarya</taxon>
        <taxon>Ascomycota</taxon>
        <taxon>Taphrinomycotina</taxon>
        <taxon>Schizosaccharomycetes</taxon>
        <taxon>Schizosaccharomycetales</taxon>
        <taxon>Schizosaccharomycetaceae</taxon>
        <taxon>Schizosaccharomyces</taxon>
    </lineage>
</organism>
<accession>O74510</accession>
<keyword id="KW-0131">Cell cycle</keyword>
<keyword id="KW-0132">Cell division</keyword>
<keyword id="KW-0159">Chromosome partition</keyword>
<keyword id="KW-0256">Endoplasmic reticulum</keyword>
<keyword id="KW-0469">Meiosis</keyword>
<keyword id="KW-0472">Membrane</keyword>
<keyword id="KW-0539">Nucleus</keyword>
<keyword id="KW-1185">Reference proteome</keyword>
<keyword id="KW-0812">Transmembrane</keyword>
<keyword id="KW-1133">Transmembrane helix</keyword>
<proteinExistence type="inferred from homology"/>